<comment type="function">
    <text evidence="1">Involved in mRNA export coupled transcription activation by association with both the TREX-2 and the SAGA complexes. At the promoters, SAGA is required for recruitment of the basal transcription machinery. It influences RNA polymerase II transcriptional activity through different activities such as TBP interaction and promoter selectivity, interaction with transcription activators, and chromatin modification through histone acetylation and deubiquitination. Within the SAGA complex, participates in a subcomplex required for deubiquitination of H2B and for the maintenance of steady-state H3 methylation levels. The TREX-2 complex functions in docking export-competent ribonucleoprotein particles (mRNPs) to the nuclear entrance of the nuclear pore complex (nuclear basket). TREX-2 participates in mRNA export and accurate chromatin positioning in the nucleus by tethering genes to the nuclear periphery. May also be involved in cytoplasmic mRNA decay by interaction with components of P-bodies (By similarity).</text>
</comment>
<comment type="subunit">
    <text evidence="2">Component of the nuclear pore complex (NPC)-associated TREX-2 complex (transcription and export complex 2), composed of at least SUS1, SAC3, THP1, SEM1, and CDC31. TREX-2 contains 2 SUS1 chains. The TREX-2 complex interacts with the nucleoporin NUP1. Component of the 1.8 MDa SAGA transcription coactivator-HAT complex. SAGA is built of 5 distinct domains with specialized functions. Within the SAGA complex, SUS1, SGF11, SGF73 and UBP8 form an additional subcomplex of SAGA called the DUB module (deubiquitination module). Interacts directly with THP1, SAC3, SGF11, and with the RNA polymerase II.</text>
</comment>
<comment type="subcellular location">
    <subcellularLocation>
        <location evidence="2">Nucleus</location>
        <location evidence="2">Nucleoplasm</location>
    </subcellularLocation>
    <subcellularLocation>
        <location evidence="2">Cytoplasm</location>
        <location evidence="2">P-body</location>
    </subcellularLocation>
</comment>
<comment type="similarity">
    <text evidence="2">Belongs to the ENY2 family.</text>
</comment>
<name>SUS1_EREGS</name>
<dbReference type="EMBL" id="AE016817">
    <property type="protein sequence ID" value="AAS51576.1"/>
    <property type="molecule type" value="Genomic_DNA"/>
</dbReference>
<dbReference type="RefSeq" id="NP_983752.1">
    <property type="nucleotide sequence ID" value="NM_209105.1"/>
</dbReference>
<dbReference type="SMR" id="Q75BB0"/>
<dbReference type="FunCoup" id="Q75BB0">
    <property type="interactions" value="371"/>
</dbReference>
<dbReference type="STRING" id="284811.Q75BB0"/>
<dbReference type="EnsemblFungi" id="AAS51576">
    <property type="protein sequence ID" value="AAS51576"/>
    <property type="gene ID" value="AGOS_ADL343C"/>
</dbReference>
<dbReference type="GeneID" id="4619887"/>
<dbReference type="KEGG" id="ago:AGOS_ADL343C"/>
<dbReference type="eggNOG" id="ENOG502S9WJ">
    <property type="taxonomic scope" value="Eukaryota"/>
</dbReference>
<dbReference type="HOGENOM" id="CLU_134052_2_1_1"/>
<dbReference type="InParanoid" id="Q75BB0"/>
<dbReference type="OMA" id="YESGWFD"/>
<dbReference type="OrthoDB" id="6221744at2759"/>
<dbReference type="Proteomes" id="UP000000591">
    <property type="component" value="Chromosome IV"/>
</dbReference>
<dbReference type="GO" id="GO:0071819">
    <property type="term" value="C:DUBm complex"/>
    <property type="evidence" value="ECO:0000318"/>
    <property type="project" value="GO_Central"/>
</dbReference>
<dbReference type="GO" id="GO:0005643">
    <property type="term" value="C:nuclear pore"/>
    <property type="evidence" value="ECO:0007669"/>
    <property type="project" value="UniProtKB-UniRule"/>
</dbReference>
<dbReference type="GO" id="GO:0005654">
    <property type="term" value="C:nucleoplasm"/>
    <property type="evidence" value="ECO:0007669"/>
    <property type="project" value="UniProtKB-SubCell"/>
</dbReference>
<dbReference type="GO" id="GO:0000932">
    <property type="term" value="C:P-body"/>
    <property type="evidence" value="ECO:0007669"/>
    <property type="project" value="UniProtKB-SubCell"/>
</dbReference>
<dbReference type="GO" id="GO:0000124">
    <property type="term" value="C:SAGA complex"/>
    <property type="evidence" value="ECO:0000318"/>
    <property type="project" value="GO_Central"/>
</dbReference>
<dbReference type="GO" id="GO:0046695">
    <property type="term" value="C:SLIK (SAGA-like) complex"/>
    <property type="evidence" value="ECO:0007669"/>
    <property type="project" value="EnsemblFungi"/>
</dbReference>
<dbReference type="GO" id="GO:0070390">
    <property type="term" value="C:transcription export complex 2"/>
    <property type="evidence" value="ECO:0007669"/>
    <property type="project" value="UniProtKB-UniRule"/>
</dbReference>
<dbReference type="GO" id="GO:0003682">
    <property type="term" value="F:chromatin binding"/>
    <property type="evidence" value="ECO:0000318"/>
    <property type="project" value="GO_Central"/>
</dbReference>
<dbReference type="GO" id="GO:0008047">
    <property type="term" value="F:enzyme activator activity"/>
    <property type="evidence" value="ECO:0007669"/>
    <property type="project" value="EnsemblFungi"/>
</dbReference>
<dbReference type="GO" id="GO:0003713">
    <property type="term" value="F:transcription coactivator activity"/>
    <property type="evidence" value="ECO:0000318"/>
    <property type="project" value="GO_Central"/>
</dbReference>
<dbReference type="GO" id="GO:0006325">
    <property type="term" value="P:chromatin organization"/>
    <property type="evidence" value="ECO:0007669"/>
    <property type="project" value="UniProtKB-KW"/>
</dbReference>
<dbReference type="GO" id="GO:0071028">
    <property type="term" value="P:nuclear mRNA surveillance"/>
    <property type="evidence" value="ECO:0007669"/>
    <property type="project" value="EnsemblFungi"/>
</dbReference>
<dbReference type="GO" id="GO:0016973">
    <property type="term" value="P:poly(A)+ mRNA export from nucleus"/>
    <property type="evidence" value="ECO:0000318"/>
    <property type="project" value="GO_Central"/>
</dbReference>
<dbReference type="GO" id="GO:0045944">
    <property type="term" value="P:positive regulation of transcription by RNA polymerase II"/>
    <property type="evidence" value="ECO:0007669"/>
    <property type="project" value="EnsemblFungi"/>
</dbReference>
<dbReference type="GO" id="GO:0000973">
    <property type="term" value="P:post-transcriptional tethering of RNA polymerase II gene DNA at nuclear periphery"/>
    <property type="evidence" value="ECO:0007669"/>
    <property type="project" value="EnsemblFungi"/>
</dbReference>
<dbReference type="GO" id="GO:0015031">
    <property type="term" value="P:protein transport"/>
    <property type="evidence" value="ECO:0007669"/>
    <property type="project" value="UniProtKB-KW"/>
</dbReference>
<dbReference type="GO" id="GO:0032880">
    <property type="term" value="P:regulation of protein localization"/>
    <property type="evidence" value="ECO:0007669"/>
    <property type="project" value="EnsemblFungi"/>
</dbReference>
<dbReference type="GO" id="GO:0006357">
    <property type="term" value="P:regulation of transcription by RNA polymerase II"/>
    <property type="evidence" value="ECO:0000318"/>
    <property type="project" value="GO_Central"/>
</dbReference>
<dbReference type="GO" id="GO:0006368">
    <property type="term" value="P:transcription elongation by RNA polymerase II"/>
    <property type="evidence" value="ECO:0007669"/>
    <property type="project" value="UniProtKB-UniRule"/>
</dbReference>
<dbReference type="Gene3D" id="1.10.246.140">
    <property type="match status" value="1"/>
</dbReference>
<dbReference type="HAMAP" id="MF_03046">
    <property type="entry name" value="ENY2_Sus1"/>
    <property type="match status" value="1"/>
</dbReference>
<dbReference type="InterPro" id="IPR018783">
    <property type="entry name" value="TF_ENY2"/>
</dbReference>
<dbReference type="InterPro" id="IPR038212">
    <property type="entry name" value="TF_EnY2_sf"/>
</dbReference>
<dbReference type="PANTHER" id="PTHR12514">
    <property type="entry name" value="ENHANCER OF YELLOW 2 TRANSCRIPTION FACTOR"/>
    <property type="match status" value="1"/>
</dbReference>
<dbReference type="Pfam" id="PF10163">
    <property type="entry name" value="EnY2"/>
    <property type="match status" value="1"/>
</dbReference>
<evidence type="ECO:0000250" key="1"/>
<evidence type="ECO:0000255" key="2">
    <source>
        <dbReference type="HAMAP-Rule" id="MF_03046"/>
    </source>
</evidence>
<protein>
    <recommendedName>
        <fullName evidence="2">Transcription and mRNA export factor SUS1</fullName>
    </recommendedName>
</protein>
<accession>Q75BB0</accession>
<sequence length="99" mass="11408">MTAKDKEALELRAQIQQHLVESGNYERISNKLAQRLLDEGWIDQVKKLTRETMEDDNTTNFSEVLKRVEPEAVSLVSANTKNEIMQQIKAFLCDILDTQ</sequence>
<gene>
    <name evidence="2" type="primary">SUS1</name>
    <name type="ordered locus">ADL343C</name>
</gene>
<proteinExistence type="inferred from homology"/>
<keyword id="KW-0010">Activator</keyword>
<keyword id="KW-0156">Chromatin regulator</keyword>
<keyword id="KW-0963">Cytoplasm</keyword>
<keyword id="KW-0509">mRNA transport</keyword>
<keyword id="KW-0539">Nucleus</keyword>
<keyword id="KW-0653">Protein transport</keyword>
<keyword id="KW-1185">Reference proteome</keyword>
<keyword id="KW-0804">Transcription</keyword>
<keyword id="KW-0805">Transcription regulation</keyword>
<keyword id="KW-0811">Translocation</keyword>
<keyword id="KW-0813">Transport</keyword>
<feature type="chain" id="PRO_0000367564" description="Transcription and mRNA export factor SUS1">
    <location>
        <begin position="1"/>
        <end position="99"/>
    </location>
</feature>
<organism>
    <name type="scientific">Eremothecium gossypii (strain ATCC 10895 / CBS 109.51 / FGSC 9923 / NRRL Y-1056)</name>
    <name type="common">Yeast</name>
    <name type="synonym">Ashbya gossypii</name>
    <dbReference type="NCBI Taxonomy" id="284811"/>
    <lineage>
        <taxon>Eukaryota</taxon>
        <taxon>Fungi</taxon>
        <taxon>Dikarya</taxon>
        <taxon>Ascomycota</taxon>
        <taxon>Saccharomycotina</taxon>
        <taxon>Saccharomycetes</taxon>
        <taxon>Saccharomycetales</taxon>
        <taxon>Saccharomycetaceae</taxon>
        <taxon>Eremothecium</taxon>
    </lineage>
</organism>
<reference key="1">
    <citation type="journal article" date="2004" name="Science">
        <title>The Ashbya gossypii genome as a tool for mapping the ancient Saccharomyces cerevisiae genome.</title>
        <authorList>
            <person name="Dietrich F.S."/>
            <person name="Voegeli S."/>
            <person name="Brachat S."/>
            <person name="Lerch A."/>
            <person name="Gates K."/>
            <person name="Steiner S."/>
            <person name="Mohr C."/>
            <person name="Poehlmann R."/>
            <person name="Luedi P."/>
            <person name="Choi S."/>
            <person name="Wing R.A."/>
            <person name="Flavier A."/>
            <person name="Gaffney T.D."/>
            <person name="Philippsen P."/>
        </authorList>
    </citation>
    <scope>NUCLEOTIDE SEQUENCE [LARGE SCALE GENOMIC DNA]</scope>
    <source>
        <strain>ATCC 10895 / CBS 109.51 / FGSC 9923 / NRRL Y-1056</strain>
    </source>
</reference>
<reference key="2">
    <citation type="journal article" date="2013" name="G3 (Bethesda)">
        <title>Genomes of Ashbya fungi isolated from insects reveal four mating-type loci, numerous translocations, lack of transposons, and distinct gene duplications.</title>
        <authorList>
            <person name="Dietrich F.S."/>
            <person name="Voegeli S."/>
            <person name="Kuo S."/>
            <person name="Philippsen P."/>
        </authorList>
    </citation>
    <scope>GENOME REANNOTATION</scope>
    <source>
        <strain>ATCC 10895 / CBS 109.51 / FGSC 9923 / NRRL Y-1056</strain>
    </source>
</reference>